<feature type="chain" id="PRO_0000295199" description="CUGBP Elav-like family member 3">
    <location>
        <begin position="1"/>
        <end position="465"/>
    </location>
</feature>
<feature type="domain" description="RRM 1" evidence="2">
    <location>
        <begin position="7"/>
        <end position="88"/>
    </location>
</feature>
<feature type="domain" description="RRM 2" evidence="2">
    <location>
        <begin position="95"/>
        <end position="174"/>
    </location>
</feature>
<feature type="domain" description="RRM 3" evidence="2">
    <location>
        <begin position="380"/>
        <end position="458"/>
    </location>
</feature>
<feature type="region of interest" description="Disordered" evidence="3">
    <location>
        <begin position="283"/>
        <end position="311"/>
    </location>
</feature>
<feature type="region of interest" description="Disordered" evidence="3">
    <location>
        <begin position="345"/>
        <end position="379"/>
    </location>
</feature>
<feature type="compositionally biased region" description="Pro residues" evidence="3">
    <location>
        <begin position="345"/>
        <end position="358"/>
    </location>
</feature>
<feature type="compositionally biased region" description="Low complexity" evidence="3">
    <location>
        <begin position="359"/>
        <end position="373"/>
    </location>
</feature>
<feature type="splice variant" id="VSP_026826" description="In isoform 2." evidence="4">
    <original>G</original>
    <variation>GE</variation>
    <location>
        <position position="92"/>
    </location>
</feature>
<feature type="splice variant" id="VSP_026827" description="In isoform 2." evidence="4">
    <original>P</original>
    <variation>PDEALSAERSAGGVPIMSQAHSWLVMLSA</variation>
    <location>
        <position position="306"/>
    </location>
</feature>
<gene>
    <name type="primary">Celf3</name>
    <name type="synonym">Tnrc4</name>
</gene>
<proteinExistence type="evidence at transcript level"/>
<sequence>MKEPDAIKLFVGQIPRHLEEKDLKPIFEQFGRIFELTVIKDKYTGLHKGCAFLTYCARDSALKAQSALHEQKTLPGMNRPIQVKPADSESRGDRKLFVGMLGKQQTDEDVRKMFEPFGTIDECTVLRGPDGTSKGCAFVKFQTHAEAQAAINTLHSSRTLPGASSSLVVKFADTEKERGLRRMQQVATQLGMFSPIALQFGAYSAYTQALMQQQAALVAAHSAYLSPMATMAAVQMQHMAAISANGLIATPITPSSGTSTPPAIAATPVSAIPAALGVNGYSPVPTQPTGQPAPDALYPNGVHPYPAQSPAAPVDPLQQAYAGMQHYTAAYPAAYSLVAPAFPQPPALVAQQPPPPPQQQQQQQQQQQQQQQQREGPDGCNIFIYHLPQEFTDSEILQMFVPFGHVISAKVFVDRATNQSKCFGFVSFDNPASAQAAIQAMNGFQIGMKRLKVQLKRPKDANRPY</sequence>
<evidence type="ECO:0000250" key="1"/>
<evidence type="ECO:0000255" key="2">
    <source>
        <dbReference type="PROSITE-ProRule" id="PRU00176"/>
    </source>
</evidence>
<evidence type="ECO:0000256" key="3">
    <source>
        <dbReference type="SAM" id="MobiDB-lite"/>
    </source>
</evidence>
<evidence type="ECO:0000303" key="4">
    <source>
    </source>
</evidence>
<evidence type="ECO:0000305" key="5"/>
<dbReference type="EMBL" id="AY165052">
    <property type="protein sequence ID" value="AAN73885.1"/>
    <property type="molecule type" value="mRNA"/>
</dbReference>
<dbReference type="EMBL" id="BC057553">
    <property type="protein sequence ID" value="AAH57553.1"/>
    <property type="molecule type" value="mRNA"/>
</dbReference>
<dbReference type="CCDS" id="CCDS38536.1">
    <molecule id="Q8CIN6-1"/>
</dbReference>
<dbReference type="CCDS" id="CCDS79972.1">
    <molecule id="Q8CIN6-2"/>
</dbReference>
<dbReference type="RefSeq" id="NP_001276542.1">
    <molecule id="Q8CIN6-2"/>
    <property type="nucleotide sequence ID" value="NM_001289613.2"/>
</dbReference>
<dbReference type="RefSeq" id="NP_001276545.1">
    <property type="nucleotide sequence ID" value="NM_001289616.1"/>
</dbReference>
<dbReference type="RefSeq" id="NP_001276549.1">
    <property type="nucleotide sequence ID" value="NM_001289620.1"/>
</dbReference>
<dbReference type="RefSeq" id="NP_001366178.1">
    <molecule id="Q8CIN6-2"/>
    <property type="nucleotide sequence ID" value="NM_001379249.1"/>
</dbReference>
<dbReference type="RefSeq" id="NP_001366179.1">
    <molecule id="Q8CIN6-1"/>
    <property type="nucleotide sequence ID" value="NM_001379250.1"/>
</dbReference>
<dbReference type="RefSeq" id="NP_766022.1">
    <molecule id="Q8CIN6-1"/>
    <property type="nucleotide sequence ID" value="NM_172434.4"/>
</dbReference>
<dbReference type="RefSeq" id="XP_006502386.1">
    <property type="nucleotide sequence ID" value="XM_006502323.3"/>
</dbReference>
<dbReference type="SMR" id="Q8CIN6"/>
<dbReference type="FunCoup" id="Q8CIN6">
    <property type="interactions" value="1153"/>
</dbReference>
<dbReference type="STRING" id="10090.ENSMUSP00000143344"/>
<dbReference type="GlyGen" id="Q8CIN6">
    <property type="glycosylation" value="1 site"/>
</dbReference>
<dbReference type="iPTMnet" id="Q8CIN6"/>
<dbReference type="PhosphoSitePlus" id="Q8CIN6"/>
<dbReference type="PaxDb" id="10090-ENSMUSP00000029784"/>
<dbReference type="ProteomicsDB" id="281576">
    <molecule id="Q8CIN6-1"/>
</dbReference>
<dbReference type="ProteomicsDB" id="281577">
    <molecule id="Q8CIN6-2"/>
</dbReference>
<dbReference type="Antibodypedia" id="20334">
    <property type="antibodies" value="91 antibodies from 21 providers"/>
</dbReference>
<dbReference type="DNASU" id="78784"/>
<dbReference type="Ensembl" id="ENSMUST00000029784.10">
    <molecule id="Q8CIN6-1"/>
    <property type="protein sequence ID" value="ENSMUSP00000029784.6"/>
    <property type="gene ID" value="ENSMUSG00000028137.10"/>
</dbReference>
<dbReference type="Ensembl" id="ENSMUST00000200342.5">
    <molecule id="Q8CIN6-2"/>
    <property type="protein sequence ID" value="ENSMUSP00000143344.2"/>
    <property type="gene ID" value="ENSMUSG00000028137.10"/>
</dbReference>
<dbReference type="GeneID" id="78784"/>
<dbReference type="KEGG" id="mmu:78784"/>
<dbReference type="UCSC" id="uc008qgl.2">
    <molecule id="Q8CIN6-1"/>
    <property type="organism name" value="mouse"/>
</dbReference>
<dbReference type="UCSC" id="uc008qgm.2">
    <molecule id="Q8CIN6-2"/>
    <property type="organism name" value="mouse"/>
</dbReference>
<dbReference type="AGR" id="MGI:1926034"/>
<dbReference type="CTD" id="11189"/>
<dbReference type="MGI" id="MGI:1926034">
    <property type="gene designation" value="Celf3"/>
</dbReference>
<dbReference type="VEuPathDB" id="HostDB:ENSMUSG00000028137"/>
<dbReference type="eggNOG" id="KOG0146">
    <property type="taxonomic scope" value="Eukaryota"/>
</dbReference>
<dbReference type="eggNOG" id="KOG4205">
    <property type="taxonomic scope" value="Eukaryota"/>
</dbReference>
<dbReference type="GeneTree" id="ENSGT00940000154716"/>
<dbReference type="InParanoid" id="Q8CIN6"/>
<dbReference type="OMA" id="SPMTLNY"/>
<dbReference type="PhylomeDB" id="Q8CIN6"/>
<dbReference type="TreeFam" id="TF314924"/>
<dbReference type="BioGRID-ORCS" id="78784">
    <property type="hits" value="2 hits in 81 CRISPR screens"/>
</dbReference>
<dbReference type="PRO" id="PR:Q8CIN6"/>
<dbReference type="Proteomes" id="UP000000589">
    <property type="component" value="Chromosome 3"/>
</dbReference>
<dbReference type="RNAct" id="Q8CIN6">
    <property type="molecule type" value="protein"/>
</dbReference>
<dbReference type="Bgee" id="ENSMUSG00000028137">
    <property type="expression patterns" value="Expressed in embryonic brain and 111 other cell types or tissues"/>
</dbReference>
<dbReference type="ExpressionAtlas" id="Q8CIN6">
    <property type="expression patterns" value="baseline and differential"/>
</dbReference>
<dbReference type="GO" id="GO:0005737">
    <property type="term" value="C:cytoplasm"/>
    <property type="evidence" value="ECO:0000314"/>
    <property type="project" value="MGI"/>
</dbReference>
<dbReference type="GO" id="GO:0016604">
    <property type="term" value="C:nuclear body"/>
    <property type="evidence" value="ECO:0000314"/>
    <property type="project" value="MGI"/>
</dbReference>
<dbReference type="GO" id="GO:0005634">
    <property type="term" value="C:nucleus"/>
    <property type="evidence" value="ECO:0000314"/>
    <property type="project" value="MGI"/>
</dbReference>
<dbReference type="GO" id="GO:0097322">
    <property type="term" value="F:7SK snRNA binding"/>
    <property type="evidence" value="ECO:0000353"/>
    <property type="project" value="MGI"/>
</dbReference>
<dbReference type="GO" id="GO:0003723">
    <property type="term" value="F:RNA binding"/>
    <property type="evidence" value="ECO:0000353"/>
    <property type="project" value="MGI"/>
</dbReference>
<dbReference type="GO" id="GO:0030317">
    <property type="term" value="P:flagellated sperm motility"/>
    <property type="evidence" value="ECO:0000315"/>
    <property type="project" value="MGI"/>
</dbReference>
<dbReference type="GO" id="GO:0140742">
    <property type="term" value="P:lncRNA transcription"/>
    <property type="evidence" value="ECO:0000315"/>
    <property type="project" value="MGI"/>
</dbReference>
<dbReference type="GO" id="GO:0006397">
    <property type="term" value="P:mRNA processing"/>
    <property type="evidence" value="ECO:0007669"/>
    <property type="project" value="UniProtKB-KW"/>
</dbReference>
<dbReference type="GO" id="GO:0030575">
    <property type="term" value="P:nuclear body organization"/>
    <property type="evidence" value="ECO:0000315"/>
    <property type="project" value="MGI"/>
</dbReference>
<dbReference type="GO" id="GO:0048026">
    <property type="term" value="P:positive regulation of mRNA splicing, via spliceosome"/>
    <property type="evidence" value="ECO:0000250"/>
    <property type="project" value="UniProtKB"/>
</dbReference>
<dbReference type="GO" id="GO:0000381">
    <property type="term" value="P:regulation of alternative mRNA splicing, via spliceosome"/>
    <property type="evidence" value="ECO:0007669"/>
    <property type="project" value="Ensembl"/>
</dbReference>
<dbReference type="GO" id="GO:0008380">
    <property type="term" value="P:RNA splicing"/>
    <property type="evidence" value="ECO:0007669"/>
    <property type="project" value="UniProtKB-KW"/>
</dbReference>
<dbReference type="GO" id="GO:0007283">
    <property type="term" value="P:spermatogenesis"/>
    <property type="evidence" value="ECO:0000315"/>
    <property type="project" value="MGI"/>
</dbReference>
<dbReference type="CDD" id="cd12632">
    <property type="entry name" value="RRM1_CELF3_4_5_6"/>
    <property type="match status" value="1"/>
</dbReference>
<dbReference type="CDD" id="cd12635">
    <property type="entry name" value="RRM2_CELF3_4_5_6"/>
    <property type="match status" value="1"/>
</dbReference>
<dbReference type="CDD" id="cd12639">
    <property type="entry name" value="RRM3_CELF3_4_5_6"/>
    <property type="match status" value="1"/>
</dbReference>
<dbReference type="FunFam" id="3.30.70.330:FF:000007">
    <property type="entry name" value="CUGBP Elav-like family member 4 isoform 3"/>
    <property type="match status" value="1"/>
</dbReference>
<dbReference type="FunFam" id="3.30.70.330:FF:000010">
    <property type="entry name" value="CUGBP Elav-like family member 4 isoform 3"/>
    <property type="match status" value="1"/>
</dbReference>
<dbReference type="FunFam" id="3.30.70.330:FF:000148">
    <property type="entry name" value="Putative CUGBP Elav-like family member 3"/>
    <property type="match status" value="1"/>
</dbReference>
<dbReference type="Gene3D" id="3.30.70.330">
    <property type="match status" value="3"/>
</dbReference>
<dbReference type="InterPro" id="IPR034648">
    <property type="entry name" value="CELF3/4/5/6_RRM1"/>
</dbReference>
<dbReference type="InterPro" id="IPR012677">
    <property type="entry name" value="Nucleotide-bd_a/b_plait_sf"/>
</dbReference>
<dbReference type="InterPro" id="IPR035979">
    <property type="entry name" value="RBD_domain_sf"/>
</dbReference>
<dbReference type="InterPro" id="IPR000504">
    <property type="entry name" value="RRM_dom"/>
</dbReference>
<dbReference type="PANTHER" id="PTHR24012">
    <property type="entry name" value="RNA BINDING PROTEIN"/>
    <property type="match status" value="1"/>
</dbReference>
<dbReference type="Pfam" id="PF00076">
    <property type="entry name" value="RRM_1"/>
    <property type="match status" value="3"/>
</dbReference>
<dbReference type="SMART" id="SM00360">
    <property type="entry name" value="RRM"/>
    <property type="match status" value="3"/>
</dbReference>
<dbReference type="SUPFAM" id="SSF54928">
    <property type="entry name" value="RNA-binding domain, RBD"/>
    <property type="match status" value="2"/>
</dbReference>
<dbReference type="PROSITE" id="PS50102">
    <property type="entry name" value="RRM"/>
    <property type="match status" value="3"/>
</dbReference>
<organism>
    <name type="scientific">Mus musculus</name>
    <name type="common">Mouse</name>
    <dbReference type="NCBI Taxonomy" id="10090"/>
    <lineage>
        <taxon>Eukaryota</taxon>
        <taxon>Metazoa</taxon>
        <taxon>Chordata</taxon>
        <taxon>Craniata</taxon>
        <taxon>Vertebrata</taxon>
        <taxon>Euteleostomi</taxon>
        <taxon>Mammalia</taxon>
        <taxon>Eutheria</taxon>
        <taxon>Euarchontoglires</taxon>
        <taxon>Glires</taxon>
        <taxon>Rodentia</taxon>
        <taxon>Myomorpha</taxon>
        <taxon>Muroidea</taxon>
        <taxon>Muridae</taxon>
        <taxon>Murinae</taxon>
        <taxon>Mus</taxon>
        <taxon>Mus</taxon>
    </lineage>
</organism>
<keyword id="KW-0010">Activator</keyword>
<keyword id="KW-0025">Alternative splicing</keyword>
<keyword id="KW-0963">Cytoplasm</keyword>
<keyword id="KW-0507">mRNA processing</keyword>
<keyword id="KW-0508">mRNA splicing</keyword>
<keyword id="KW-0539">Nucleus</keyword>
<keyword id="KW-1185">Reference proteome</keyword>
<keyword id="KW-0677">Repeat</keyword>
<keyword id="KW-0694">RNA-binding</keyword>
<accession>Q8CIN6</accession>
<accession>Q6PFH2</accession>
<comment type="function">
    <text evidence="1">RNA-binding protein involved in the regulation of pre-mRNA alternative splicing. Mediates exon inclusion and/or exclusion in pre-mRNA that are subject to tissue-specific and developmentally regulated alternative splicing. Specifically activates exon 5 inclusion of cardiac isoforms of TNNT2 during heart remodeling at the juvenile to adult transition. Activates the splicing of MAPT/Tau exon 10. Binds to muscle-specific splicing enhancer (MSE) intronic sites flanking the alternative exon 5 of TNNT2 pre-mRNA (By similarity).</text>
</comment>
<comment type="subcellular location">
    <subcellularLocation>
        <location evidence="1">Nucleus</location>
    </subcellularLocation>
    <subcellularLocation>
        <location evidence="1">Cytoplasm</location>
    </subcellularLocation>
</comment>
<comment type="alternative products">
    <event type="alternative splicing"/>
    <isoform>
        <id>Q8CIN6-1</id>
        <name>1</name>
        <sequence type="displayed"/>
    </isoform>
    <isoform>
        <id>Q8CIN6-2</id>
        <name>2</name>
        <sequence type="described" ref="VSP_026826 VSP_026827"/>
    </isoform>
</comment>
<comment type="similarity">
    <text evidence="5">Belongs to the CELF/BRUNOL family.</text>
</comment>
<name>CELF3_MOUSE</name>
<protein>
    <recommendedName>
        <fullName>CUGBP Elav-like family member 3</fullName>
        <shortName>CELF-3</shortName>
    </recommendedName>
    <alternativeName>
        <fullName>Bruno-like protein 1</fullName>
    </alternativeName>
    <alternativeName>
        <fullName>CUG-BP- and ETR-3-like factor 3</fullName>
    </alternativeName>
    <alternativeName>
        <fullName>ELAV-type RNA-binding protein 1</fullName>
        <shortName>ETR-1</shortName>
    </alternativeName>
    <alternativeName>
        <fullName>RNA-binding protein BRUNOL-1</fullName>
    </alternativeName>
    <alternativeName>
        <fullName>Trinucleotide repeat-containing gene 4 protein</fullName>
    </alternativeName>
</protein>
<reference key="1">
    <citation type="submission" date="2002-10" db="EMBL/GenBank/DDBJ databases">
        <title>The RNA binding protein CELF3 associates to the DMPK mRNA and is a negative regulator of mRNA stability involved in neuronal differentiation.</title>
        <authorList>
            <person name="d'Apolito M."/>
            <person name="Savino M."/>
            <person name="Grifa A."/>
            <person name="Quattrone A."/>
        </authorList>
    </citation>
    <scope>NUCLEOTIDE SEQUENCE [MRNA] (ISOFORM 1)</scope>
    <source>
        <tissue>Brain</tissue>
    </source>
</reference>
<reference key="2">
    <citation type="journal article" date="2004" name="Genome Res.">
        <title>The status, quality, and expansion of the NIH full-length cDNA project: the Mammalian Gene Collection (MGC).</title>
        <authorList>
            <consortium name="The MGC Project Team"/>
        </authorList>
    </citation>
    <scope>NUCLEOTIDE SEQUENCE [LARGE SCALE MRNA] (ISOFORM 2)</scope>
    <source>
        <strain>C57BL/6J</strain>
        <tissue>Fetal brain</tissue>
    </source>
</reference>